<evidence type="ECO:0000255" key="1">
    <source>
        <dbReference type="HAMAP-Rule" id="MF_00421"/>
    </source>
</evidence>
<name>PURQ_PSELT</name>
<organism>
    <name type="scientific">Pseudothermotoga lettingae (strain ATCC BAA-301 / DSM 14385 / NBRC 107922 / TMO)</name>
    <name type="common">Thermotoga lettingae</name>
    <dbReference type="NCBI Taxonomy" id="416591"/>
    <lineage>
        <taxon>Bacteria</taxon>
        <taxon>Thermotogati</taxon>
        <taxon>Thermotogota</taxon>
        <taxon>Thermotogae</taxon>
        <taxon>Thermotogales</taxon>
        <taxon>Thermotogaceae</taxon>
        <taxon>Pseudothermotoga</taxon>
    </lineage>
</organism>
<comment type="function">
    <text evidence="1">Part of the phosphoribosylformylglycinamidine synthase complex involved in the purines biosynthetic pathway. Catalyzes the ATP-dependent conversion of formylglycinamide ribonucleotide (FGAR) and glutamine to yield formylglycinamidine ribonucleotide (FGAM) and glutamate. The FGAM synthase complex is composed of three subunits. PurQ produces an ammonia molecule by converting glutamine to glutamate. PurL transfers the ammonia molecule to FGAR to form FGAM in an ATP-dependent manner. PurS interacts with PurQ and PurL and is thought to assist in the transfer of the ammonia molecule from PurQ to PurL.</text>
</comment>
<comment type="catalytic activity">
    <reaction evidence="1">
        <text>N(2)-formyl-N(1)-(5-phospho-beta-D-ribosyl)glycinamide + L-glutamine + ATP + H2O = 2-formamido-N(1)-(5-O-phospho-beta-D-ribosyl)acetamidine + L-glutamate + ADP + phosphate + H(+)</text>
        <dbReference type="Rhea" id="RHEA:17129"/>
        <dbReference type="ChEBI" id="CHEBI:15377"/>
        <dbReference type="ChEBI" id="CHEBI:15378"/>
        <dbReference type="ChEBI" id="CHEBI:29985"/>
        <dbReference type="ChEBI" id="CHEBI:30616"/>
        <dbReference type="ChEBI" id="CHEBI:43474"/>
        <dbReference type="ChEBI" id="CHEBI:58359"/>
        <dbReference type="ChEBI" id="CHEBI:147286"/>
        <dbReference type="ChEBI" id="CHEBI:147287"/>
        <dbReference type="ChEBI" id="CHEBI:456216"/>
        <dbReference type="EC" id="6.3.5.3"/>
    </reaction>
</comment>
<comment type="catalytic activity">
    <reaction evidence="1">
        <text>L-glutamine + H2O = L-glutamate + NH4(+)</text>
        <dbReference type="Rhea" id="RHEA:15889"/>
        <dbReference type="ChEBI" id="CHEBI:15377"/>
        <dbReference type="ChEBI" id="CHEBI:28938"/>
        <dbReference type="ChEBI" id="CHEBI:29985"/>
        <dbReference type="ChEBI" id="CHEBI:58359"/>
        <dbReference type="EC" id="3.5.1.2"/>
    </reaction>
</comment>
<comment type="pathway">
    <text evidence="1">Purine metabolism; IMP biosynthesis via de novo pathway; 5-amino-1-(5-phospho-D-ribosyl)imidazole from N(2)-formyl-N(1)-(5-phospho-D-ribosyl)glycinamide: step 1/2.</text>
</comment>
<comment type="subunit">
    <text evidence="1">Part of the FGAM synthase complex composed of 1 PurL, 1 PurQ and 2 PurS subunits.</text>
</comment>
<comment type="subcellular location">
    <subcellularLocation>
        <location evidence="1">Cytoplasm</location>
    </subcellularLocation>
</comment>
<protein>
    <recommendedName>
        <fullName evidence="1">Phosphoribosylformylglycinamidine synthase subunit PurQ</fullName>
        <shortName evidence="1">FGAM synthase</shortName>
        <ecNumber evidence="1">6.3.5.3</ecNumber>
    </recommendedName>
    <alternativeName>
        <fullName evidence="1">Formylglycinamide ribonucleotide amidotransferase subunit I</fullName>
        <shortName evidence="1">FGAR amidotransferase I</shortName>
        <shortName evidence="1">FGAR-AT I</shortName>
    </alternativeName>
    <alternativeName>
        <fullName evidence="1">Glutaminase PurQ</fullName>
        <ecNumber evidence="1">3.5.1.2</ecNumber>
    </alternativeName>
    <alternativeName>
        <fullName evidence="1">Phosphoribosylformylglycinamidine synthase subunit I</fullName>
    </alternativeName>
</protein>
<gene>
    <name evidence="1" type="primary">purQ</name>
    <name type="ordered locus">Tlet_1914</name>
</gene>
<proteinExistence type="inferred from homology"/>
<feature type="chain" id="PRO_1000124130" description="Phosphoribosylformylglycinamidine synthase subunit PurQ">
    <location>
        <begin position="1"/>
        <end position="234"/>
    </location>
</feature>
<feature type="domain" description="Glutamine amidotransferase type-1" evidence="1">
    <location>
        <begin position="3"/>
        <end position="231"/>
    </location>
</feature>
<feature type="active site" description="Nucleophile" evidence="1">
    <location>
        <position position="87"/>
    </location>
</feature>
<feature type="active site" evidence="1">
    <location>
        <position position="200"/>
    </location>
</feature>
<feature type="active site" evidence="1">
    <location>
        <position position="202"/>
    </location>
</feature>
<sequence length="234" mass="26306">MKAAVVVFPGSNCDKDTFYVLKYVMGFDCYYVFHKDHFYEKEFDLIVLPGGFSYGDYLRAGAIARFSPVMRSVSKAAENGVLIVGICNGFQILTEAGLLPGVLMKNKDLRFHCHDVYLRVDNNKTPFTLAYSEGEVIKMNIAHGEGNYYFDHCKEIEDKIVLRYCDRNGNITEDSNPNGSVLNIAGIVSKNGNVFGLMPHPERCSEKLLGSDNGKKIFESVALYLERRKDHAFA</sequence>
<keyword id="KW-0067">ATP-binding</keyword>
<keyword id="KW-0963">Cytoplasm</keyword>
<keyword id="KW-0315">Glutamine amidotransferase</keyword>
<keyword id="KW-0378">Hydrolase</keyword>
<keyword id="KW-0436">Ligase</keyword>
<keyword id="KW-0547">Nucleotide-binding</keyword>
<keyword id="KW-0658">Purine biosynthesis</keyword>
<keyword id="KW-1185">Reference proteome</keyword>
<accession>A8F8I4</accession>
<reference key="1">
    <citation type="submission" date="2007-08" db="EMBL/GenBank/DDBJ databases">
        <title>Complete sequence of Thermotoga lettingae TMO.</title>
        <authorList>
            <consortium name="US DOE Joint Genome Institute"/>
            <person name="Copeland A."/>
            <person name="Lucas S."/>
            <person name="Lapidus A."/>
            <person name="Barry K."/>
            <person name="Glavina del Rio T."/>
            <person name="Dalin E."/>
            <person name="Tice H."/>
            <person name="Pitluck S."/>
            <person name="Foster B."/>
            <person name="Bruce D."/>
            <person name="Schmutz J."/>
            <person name="Larimer F."/>
            <person name="Land M."/>
            <person name="Hauser L."/>
            <person name="Kyrpides N."/>
            <person name="Mikhailova N."/>
            <person name="Nelson K."/>
            <person name="Gogarten J.P."/>
            <person name="Noll K."/>
            <person name="Richardson P."/>
        </authorList>
    </citation>
    <scope>NUCLEOTIDE SEQUENCE [LARGE SCALE GENOMIC DNA]</scope>
    <source>
        <strain>ATCC BAA-301 / DSM 14385 / NBRC 107922 / TMO</strain>
    </source>
</reference>
<dbReference type="EC" id="6.3.5.3" evidence="1"/>
<dbReference type="EC" id="3.5.1.2" evidence="1"/>
<dbReference type="EMBL" id="CP000812">
    <property type="protein sequence ID" value="ABV34468.1"/>
    <property type="molecule type" value="Genomic_DNA"/>
</dbReference>
<dbReference type="RefSeq" id="WP_012003944.1">
    <property type="nucleotide sequence ID" value="NC_009828.1"/>
</dbReference>
<dbReference type="SMR" id="A8F8I4"/>
<dbReference type="STRING" id="416591.Tlet_1914"/>
<dbReference type="KEGG" id="tle:Tlet_1914"/>
<dbReference type="eggNOG" id="COG0047">
    <property type="taxonomic scope" value="Bacteria"/>
</dbReference>
<dbReference type="HOGENOM" id="CLU_001031_3_1_0"/>
<dbReference type="OrthoDB" id="9804441at2"/>
<dbReference type="UniPathway" id="UPA00074">
    <property type="reaction ID" value="UER00128"/>
</dbReference>
<dbReference type="Proteomes" id="UP000002016">
    <property type="component" value="Chromosome"/>
</dbReference>
<dbReference type="GO" id="GO:0005737">
    <property type="term" value="C:cytoplasm"/>
    <property type="evidence" value="ECO:0007669"/>
    <property type="project" value="UniProtKB-SubCell"/>
</dbReference>
<dbReference type="GO" id="GO:0005524">
    <property type="term" value="F:ATP binding"/>
    <property type="evidence" value="ECO:0007669"/>
    <property type="project" value="UniProtKB-KW"/>
</dbReference>
<dbReference type="GO" id="GO:0004359">
    <property type="term" value="F:glutaminase activity"/>
    <property type="evidence" value="ECO:0007669"/>
    <property type="project" value="UniProtKB-EC"/>
</dbReference>
<dbReference type="GO" id="GO:0004642">
    <property type="term" value="F:phosphoribosylformylglycinamidine synthase activity"/>
    <property type="evidence" value="ECO:0007669"/>
    <property type="project" value="UniProtKB-UniRule"/>
</dbReference>
<dbReference type="GO" id="GO:0006189">
    <property type="term" value="P:'de novo' IMP biosynthetic process"/>
    <property type="evidence" value="ECO:0007669"/>
    <property type="project" value="UniProtKB-UniRule"/>
</dbReference>
<dbReference type="CDD" id="cd01740">
    <property type="entry name" value="GATase1_FGAR_AT"/>
    <property type="match status" value="1"/>
</dbReference>
<dbReference type="Gene3D" id="3.40.50.880">
    <property type="match status" value="1"/>
</dbReference>
<dbReference type="HAMAP" id="MF_00421">
    <property type="entry name" value="PurQ"/>
    <property type="match status" value="1"/>
</dbReference>
<dbReference type="InterPro" id="IPR029062">
    <property type="entry name" value="Class_I_gatase-like"/>
</dbReference>
<dbReference type="InterPro" id="IPR010075">
    <property type="entry name" value="PRibForGlyAmidine_synth_PurQ"/>
</dbReference>
<dbReference type="NCBIfam" id="TIGR01737">
    <property type="entry name" value="FGAM_synth_I"/>
    <property type="match status" value="1"/>
</dbReference>
<dbReference type="NCBIfam" id="NF002957">
    <property type="entry name" value="PRK03619.1"/>
    <property type="match status" value="1"/>
</dbReference>
<dbReference type="PANTHER" id="PTHR47552">
    <property type="entry name" value="PHOSPHORIBOSYLFORMYLGLYCINAMIDINE SYNTHASE SUBUNIT PURQ"/>
    <property type="match status" value="1"/>
</dbReference>
<dbReference type="PANTHER" id="PTHR47552:SF1">
    <property type="entry name" value="PHOSPHORIBOSYLFORMYLGLYCINAMIDINE SYNTHASE SUBUNIT PURQ"/>
    <property type="match status" value="1"/>
</dbReference>
<dbReference type="Pfam" id="PF13507">
    <property type="entry name" value="GATase_5"/>
    <property type="match status" value="1"/>
</dbReference>
<dbReference type="PIRSF" id="PIRSF001586">
    <property type="entry name" value="FGAM_synth_I"/>
    <property type="match status" value="1"/>
</dbReference>
<dbReference type="SMART" id="SM01211">
    <property type="entry name" value="GATase_5"/>
    <property type="match status" value="1"/>
</dbReference>
<dbReference type="SUPFAM" id="SSF52317">
    <property type="entry name" value="Class I glutamine amidotransferase-like"/>
    <property type="match status" value="1"/>
</dbReference>
<dbReference type="PROSITE" id="PS51273">
    <property type="entry name" value="GATASE_TYPE_1"/>
    <property type="match status" value="1"/>
</dbReference>